<accession>A6R603</accession>
<dbReference type="EC" id="3.6.4.13"/>
<dbReference type="EMBL" id="CH476659">
    <property type="protein sequence ID" value="EDN08562.1"/>
    <property type="status" value="ALT_SEQ"/>
    <property type="molecule type" value="Genomic_DNA"/>
</dbReference>
<dbReference type="SMR" id="A6R603"/>
<dbReference type="STRING" id="339724.A6R603"/>
<dbReference type="KEGG" id="aje:HCAG_05061"/>
<dbReference type="HOGENOM" id="CLU_003041_1_0_1"/>
<dbReference type="OrthoDB" id="2166at299071"/>
<dbReference type="Proteomes" id="UP000009297">
    <property type="component" value="Unassembled WGS sequence"/>
</dbReference>
<dbReference type="GO" id="GO:0005681">
    <property type="term" value="C:spliceosomal complex"/>
    <property type="evidence" value="ECO:0007669"/>
    <property type="project" value="UniProtKB-KW"/>
</dbReference>
<dbReference type="GO" id="GO:0005524">
    <property type="term" value="F:ATP binding"/>
    <property type="evidence" value="ECO:0007669"/>
    <property type="project" value="UniProtKB-KW"/>
</dbReference>
<dbReference type="GO" id="GO:0016887">
    <property type="term" value="F:ATP hydrolysis activity"/>
    <property type="evidence" value="ECO:0007669"/>
    <property type="project" value="RHEA"/>
</dbReference>
<dbReference type="GO" id="GO:0003723">
    <property type="term" value="F:RNA binding"/>
    <property type="evidence" value="ECO:0007669"/>
    <property type="project" value="UniProtKB-KW"/>
</dbReference>
<dbReference type="GO" id="GO:0003724">
    <property type="term" value="F:RNA helicase activity"/>
    <property type="evidence" value="ECO:0007669"/>
    <property type="project" value="UniProtKB-EC"/>
</dbReference>
<dbReference type="GO" id="GO:0006397">
    <property type="term" value="P:mRNA processing"/>
    <property type="evidence" value="ECO:0007669"/>
    <property type="project" value="UniProtKB-KW"/>
</dbReference>
<dbReference type="GO" id="GO:0051028">
    <property type="term" value="P:mRNA transport"/>
    <property type="evidence" value="ECO:0007669"/>
    <property type="project" value="UniProtKB-KW"/>
</dbReference>
<dbReference type="GO" id="GO:0008380">
    <property type="term" value="P:RNA splicing"/>
    <property type="evidence" value="ECO:0007669"/>
    <property type="project" value="UniProtKB-KW"/>
</dbReference>
<dbReference type="CDD" id="cd17950">
    <property type="entry name" value="DEADc_DDX39"/>
    <property type="match status" value="1"/>
</dbReference>
<dbReference type="CDD" id="cd18787">
    <property type="entry name" value="SF2_C_DEAD"/>
    <property type="match status" value="1"/>
</dbReference>
<dbReference type="FunFam" id="3.40.50.300:FF:000111">
    <property type="entry name" value="DEAD-box ATP-dependent RNA helicase"/>
    <property type="match status" value="1"/>
</dbReference>
<dbReference type="FunFam" id="3.40.50.300:FF:000168">
    <property type="entry name" value="DEAD-box ATP-dependent RNA helicase 56-like"/>
    <property type="match status" value="1"/>
</dbReference>
<dbReference type="Gene3D" id="3.40.50.300">
    <property type="entry name" value="P-loop containing nucleotide triphosphate hydrolases"/>
    <property type="match status" value="2"/>
</dbReference>
<dbReference type="InterPro" id="IPR011545">
    <property type="entry name" value="DEAD/DEAH_box_helicase_dom"/>
</dbReference>
<dbReference type="InterPro" id="IPR014001">
    <property type="entry name" value="Helicase_ATP-bd"/>
</dbReference>
<dbReference type="InterPro" id="IPR001650">
    <property type="entry name" value="Helicase_C-like"/>
</dbReference>
<dbReference type="InterPro" id="IPR027417">
    <property type="entry name" value="P-loop_NTPase"/>
</dbReference>
<dbReference type="InterPro" id="IPR014014">
    <property type="entry name" value="RNA_helicase_DEAD_Q_motif"/>
</dbReference>
<dbReference type="PANTHER" id="PTHR47958">
    <property type="entry name" value="ATP-DEPENDENT RNA HELICASE DBP3"/>
    <property type="match status" value="1"/>
</dbReference>
<dbReference type="Pfam" id="PF00270">
    <property type="entry name" value="DEAD"/>
    <property type="match status" value="1"/>
</dbReference>
<dbReference type="Pfam" id="PF00271">
    <property type="entry name" value="Helicase_C"/>
    <property type="match status" value="1"/>
</dbReference>
<dbReference type="SMART" id="SM00487">
    <property type="entry name" value="DEXDc"/>
    <property type="match status" value="1"/>
</dbReference>
<dbReference type="SMART" id="SM00490">
    <property type="entry name" value="HELICc"/>
    <property type="match status" value="1"/>
</dbReference>
<dbReference type="SUPFAM" id="SSF52540">
    <property type="entry name" value="P-loop containing nucleoside triphosphate hydrolases"/>
    <property type="match status" value="1"/>
</dbReference>
<dbReference type="PROSITE" id="PS51192">
    <property type="entry name" value="HELICASE_ATP_BIND_1"/>
    <property type="match status" value="1"/>
</dbReference>
<dbReference type="PROSITE" id="PS51194">
    <property type="entry name" value="HELICASE_CTER"/>
    <property type="match status" value="1"/>
</dbReference>
<dbReference type="PROSITE" id="PS51195">
    <property type="entry name" value="Q_MOTIF"/>
    <property type="match status" value="1"/>
</dbReference>
<organism>
    <name type="scientific">Ajellomyces capsulatus (strain NAm1 / WU24)</name>
    <name type="common">Darling's disease fungus</name>
    <name type="synonym">Histoplasma capsulatum</name>
    <dbReference type="NCBI Taxonomy" id="2059318"/>
    <lineage>
        <taxon>Eukaryota</taxon>
        <taxon>Fungi</taxon>
        <taxon>Dikarya</taxon>
        <taxon>Ascomycota</taxon>
        <taxon>Pezizomycotina</taxon>
        <taxon>Eurotiomycetes</taxon>
        <taxon>Eurotiomycetidae</taxon>
        <taxon>Onygenales</taxon>
        <taxon>Ajellomycetaceae</taxon>
        <taxon>Histoplasma</taxon>
    </lineage>
</organism>
<name>SUB2_AJECN</name>
<evidence type="ECO:0000250" key="1"/>
<evidence type="ECO:0000255" key="2">
    <source>
        <dbReference type="PROSITE-ProRule" id="PRU00541"/>
    </source>
</evidence>
<evidence type="ECO:0000255" key="3">
    <source>
        <dbReference type="PROSITE-ProRule" id="PRU00542"/>
    </source>
</evidence>
<evidence type="ECO:0000305" key="4"/>
<reference key="1">
    <citation type="journal article" date="2009" name="Genome Res.">
        <title>Comparative genomic analyses of the human fungal pathogens Coccidioides and their relatives.</title>
        <authorList>
            <person name="Sharpton T.J."/>
            <person name="Stajich J.E."/>
            <person name="Rounsley S.D."/>
            <person name="Gardner M.J."/>
            <person name="Wortman J.R."/>
            <person name="Jordar V.S."/>
            <person name="Maiti R."/>
            <person name="Kodira C.D."/>
            <person name="Neafsey D.E."/>
            <person name="Zeng Q."/>
            <person name="Hung C.-Y."/>
            <person name="McMahan C."/>
            <person name="Muszewska A."/>
            <person name="Grynberg M."/>
            <person name="Mandel M.A."/>
            <person name="Kellner E.M."/>
            <person name="Barker B.M."/>
            <person name="Galgiani J.N."/>
            <person name="Orbach M.J."/>
            <person name="Kirkland T.N."/>
            <person name="Cole G.T."/>
            <person name="Henn M.R."/>
            <person name="Birren B.W."/>
            <person name="Taylor J.W."/>
        </authorList>
    </citation>
    <scope>NUCLEOTIDE SEQUENCE [LARGE SCALE GENOMIC DNA]</scope>
    <source>
        <strain>NAm1 / WU24</strain>
    </source>
</reference>
<proteinExistence type="inferred from homology"/>
<keyword id="KW-0067">ATP-binding</keyword>
<keyword id="KW-0347">Helicase</keyword>
<keyword id="KW-0378">Hydrolase</keyword>
<keyword id="KW-0507">mRNA processing</keyword>
<keyword id="KW-0508">mRNA splicing</keyword>
<keyword id="KW-0509">mRNA transport</keyword>
<keyword id="KW-0547">Nucleotide-binding</keyword>
<keyword id="KW-0539">Nucleus</keyword>
<keyword id="KW-1185">Reference proteome</keyword>
<keyword id="KW-0694">RNA-binding</keyword>
<keyword id="KW-0747">Spliceosome</keyword>
<keyword id="KW-0813">Transport</keyword>
<gene>
    <name type="primary">SUB2</name>
    <name type="ORF">HCAG_05061</name>
</gene>
<comment type="function">
    <text evidence="1">ATP-binding RNA helicase involved in transcription elongation and required for the export of mRNA out of the nucleus. SUB2 also plays a role in pre-mRNA splicing and spliceosome assembly. May be involved in rDNA and telomeric silencing, and maintenance of genome integrity (By similarity).</text>
</comment>
<comment type="catalytic activity">
    <reaction>
        <text>ATP + H2O = ADP + phosphate + H(+)</text>
        <dbReference type="Rhea" id="RHEA:13065"/>
        <dbReference type="ChEBI" id="CHEBI:15377"/>
        <dbReference type="ChEBI" id="CHEBI:15378"/>
        <dbReference type="ChEBI" id="CHEBI:30616"/>
        <dbReference type="ChEBI" id="CHEBI:43474"/>
        <dbReference type="ChEBI" id="CHEBI:456216"/>
        <dbReference type="EC" id="3.6.4.13"/>
    </reaction>
</comment>
<comment type="subcellular location">
    <subcellularLocation>
        <location evidence="1">Nucleus</location>
    </subcellularLocation>
</comment>
<comment type="domain">
    <text>The Q motif is unique to and characteristic of the DEAD box family of RNA helicases and controls ATP binding and hydrolysis.</text>
</comment>
<comment type="similarity">
    <text evidence="4">Belongs to the DEAD box helicase family. DECD subfamily.</text>
</comment>
<comment type="sequence caution" evidence="4">
    <conflict type="erroneous gene model prediction">
        <sequence resource="EMBL-CDS" id="EDN08562"/>
    </conflict>
</comment>
<feature type="chain" id="PRO_0000310221" description="ATP-dependent RNA helicase SUB2">
    <location>
        <begin position="1"/>
        <end position="442"/>
    </location>
</feature>
<feature type="domain" description="Helicase ATP-binding" evidence="2">
    <location>
        <begin position="90"/>
        <end position="265"/>
    </location>
</feature>
<feature type="domain" description="Helicase C-terminal" evidence="3">
    <location>
        <begin position="293"/>
        <end position="438"/>
    </location>
</feature>
<feature type="short sequence motif" description="Q motif">
    <location>
        <begin position="59"/>
        <end position="87"/>
    </location>
</feature>
<feature type="short sequence motif" description="DECD box">
    <location>
        <begin position="212"/>
        <end position="215"/>
    </location>
</feature>
<feature type="binding site" evidence="2">
    <location>
        <begin position="103"/>
        <end position="110"/>
    </location>
    <ligand>
        <name>ATP</name>
        <dbReference type="ChEBI" id="CHEBI:30616"/>
    </ligand>
</feature>
<sequence length="442" mass="49388">MSHEEDLIDYSDEELQATDAAAGTAAAGANGAAPKKEGDLTVSGARADKKGSYVGIHSTGFRDFLLKGELLRAITDCGFEHPSEVQQVCIPTAILNVDVLCQAKSGLGKTAVFVLTTLHQLEPVPGECSILVMCHTRELAYQIKNEYARFSKYLPDVKTAVFYGGTPMQKDIELLSSKDTYPSIVVGTPGRLNALVRDKKLSLRNIKAFVLDECDKMLDQIDMRRDVQEIFRATPADKQVMMFSATLSQEVRPICKKFMRNPLEVYVDDDTKLTLHGLLQYYIKLGESEKNRKLNELLDSLEFNQVIIFVKSTQRASELDKLLRECNFPSIAVHSGVSQEERIKRYKEFKEFNKRICVATDVFGRGIDIERINLAINYDLPADADSYLHRVGRAGRFGTKGLAISFVSSEQDQEVLKDIEKRFEVALPEYPQGGVDSSAYMA</sequence>
<protein>
    <recommendedName>
        <fullName>ATP-dependent RNA helicase SUB2</fullName>
        <ecNumber>3.6.4.13</ecNumber>
    </recommendedName>
</protein>